<name>BIOF_BEII9</name>
<keyword id="KW-0012">Acyltransferase</keyword>
<keyword id="KW-0093">Biotin biosynthesis</keyword>
<keyword id="KW-0663">Pyridoxal phosphate</keyword>
<keyword id="KW-1185">Reference proteome</keyword>
<keyword id="KW-0808">Transferase</keyword>
<feature type="chain" id="PRO_0000380922" description="8-amino-7-oxononanoate synthase">
    <location>
        <begin position="1"/>
        <end position="386"/>
    </location>
</feature>
<feature type="binding site" evidence="1">
    <location>
        <position position="22"/>
    </location>
    <ligand>
        <name>substrate</name>
    </ligand>
</feature>
<feature type="binding site" evidence="1">
    <location>
        <position position="29"/>
    </location>
    <ligand>
        <name>substrate</name>
    </ligand>
</feature>
<feature type="binding site" evidence="1">
    <location>
        <begin position="109"/>
        <end position="110"/>
    </location>
    <ligand>
        <name>pyridoxal 5'-phosphate</name>
        <dbReference type="ChEBI" id="CHEBI:597326"/>
    </ligand>
</feature>
<feature type="binding site" evidence="1">
    <location>
        <position position="134"/>
    </location>
    <ligand>
        <name>substrate</name>
    </ligand>
</feature>
<feature type="binding site" evidence="1">
    <location>
        <position position="182"/>
    </location>
    <ligand>
        <name>pyridoxal 5'-phosphate</name>
        <dbReference type="ChEBI" id="CHEBI:597326"/>
    </ligand>
</feature>
<feature type="binding site" evidence="1">
    <location>
        <begin position="207"/>
        <end position="210"/>
    </location>
    <ligand>
        <name>pyridoxal 5'-phosphate</name>
        <dbReference type="ChEBI" id="CHEBI:597326"/>
    </ligand>
</feature>
<feature type="binding site" evidence="1">
    <location>
        <begin position="237"/>
        <end position="240"/>
    </location>
    <ligand>
        <name>pyridoxal 5'-phosphate</name>
        <dbReference type="ChEBI" id="CHEBI:597326"/>
    </ligand>
</feature>
<feature type="binding site" evidence="1">
    <location>
        <position position="349"/>
    </location>
    <ligand>
        <name>substrate</name>
    </ligand>
</feature>
<feature type="modified residue" description="N6-(pyridoxal phosphate)lysine" evidence="1">
    <location>
        <position position="240"/>
    </location>
</feature>
<gene>
    <name type="ordered locus">Bind_0814</name>
</gene>
<reference key="1">
    <citation type="journal article" date="2010" name="J. Bacteriol.">
        <title>Complete genome sequence of Beijerinckia indica subsp. indica.</title>
        <authorList>
            <person name="Tamas I."/>
            <person name="Dedysh S.N."/>
            <person name="Liesack W."/>
            <person name="Stott M.B."/>
            <person name="Alam M."/>
            <person name="Murrell J.C."/>
            <person name="Dunfield P.F."/>
        </authorList>
    </citation>
    <scope>NUCLEOTIDE SEQUENCE [LARGE SCALE GENOMIC DNA]</scope>
    <source>
        <strain>ATCC 9039 / DSM 1715 / NCIMB 8712</strain>
    </source>
</reference>
<protein>
    <recommendedName>
        <fullName>8-amino-7-oxononanoate synthase</fullName>
        <shortName>AONS</shortName>
        <ecNumber>2.3.1.47</ecNumber>
    </recommendedName>
    <alternativeName>
        <fullName>7-keto-8-amino-pelargonic acid synthase</fullName>
        <shortName>7-KAP synthase</shortName>
        <shortName>KAPA synthase</shortName>
    </alternativeName>
    <alternativeName>
        <fullName>8-amino-7-ketopelargonate synthase</fullName>
    </alternativeName>
    <alternativeName>
        <fullName>Alpha-oxoamine synthase</fullName>
    </alternativeName>
</protein>
<organism>
    <name type="scientific">Beijerinckia indica subsp. indica (strain ATCC 9039 / DSM 1715 / NCIMB 8712)</name>
    <dbReference type="NCBI Taxonomy" id="395963"/>
    <lineage>
        <taxon>Bacteria</taxon>
        <taxon>Pseudomonadati</taxon>
        <taxon>Pseudomonadota</taxon>
        <taxon>Alphaproteobacteria</taxon>
        <taxon>Hyphomicrobiales</taxon>
        <taxon>Beijerinckiaceae</taxon>
        <taxon>Beijerinckia</taxon>
    </lineage>
</organism>
<sequence length="386" mass="40992">MNSLDAFAAAKLADLEERGLRRTLRENWREDGLWISVDGQKLLSFSCNDYLNLTHHPALKAAAIRAIETYGVGAGASRLVTGNHPLLEKLEARLAALKGSEAACIFGAGYLANTGIIPTLVGKDDLILIDELAHACLFAGTQLSPATVRIFRHNDIAEVESLLATNRAHYRHALLLTDGVFSMDGDLAPLPALAEICTHHDCWLMADDAHGLGVIGQGRGSRHAFDPAPVIPLQMGTLSKAIGGYGGYLCASKPVIDLMKTRARTVVYSTGLPPALAASALAALDLIESDSDLVKKPLANARLFTTRLGLSPAQSPIVPIILGTVEAVMSAAQTLFTQGFLVTPIRPPTVPEGTARLRFAFTAGHAAEDILHLADVVAPLMPAKAR</sequence>
<evidence type="ECO:0000250" key="1"/>
<evidence type="ECO:0000305" key="2"/>
<dbReference type="EC" id="2.3.1.47"/>
<dbReference type="EMBL" id="CP001016">
    <property type="protein sequence ID" value="ACB94464.1"/>
    <property type="molecule type" value="Genomic_DNA"/>
</dbReference>
<dbReference type="RefSeq" id="WP_012383821.1">
    <property type="nucleotide sequence ID" value="NC_010581.1"/>
</dbReference>
<dbReference type="SMR" id="B2IH50"/>
<dbReference type="STRING" id="395963.Bind_0814"/>
<dbReference type="KEGG" id="bid:Bind_0814"/>
<dbReference type="eggNOG" id="COG0156">
    <property type="taxonomic scope" value="Bacteria"/>
</dbReference>
<dbReference type="HOGENOM" id="CLU_015846_11_2_5"/>
<dbReference type="OrthoDB" id="9807157at2"/>
<dbReference type="UniPathway" id="UPA00078"/>
<dbReference type="Proteomes" id="UP000001695">
    <property type="component" value="Chromosome"/>
</dbReference>
<dbReference type="GO" id="GO:0008710">
    <property type="term" value="F:8-amino-7-oxononanoate synthase activity"/>
    <property type="evidence" value="ECO:0007669"/>
    <property type="project" value="UniProtKB-EC"/>
</dbReference>
<dbReference type="GO" id="GO:0030170">
    <property type="term" value="F:pyridoxal phosphate binding"/>
    <property type="evidence" value="ECO:0007669"/>
    <property type="project" value="InterPro"/>
</dbReference>
<dbReference type="GO" id="GO:0009102">
    <property type="term" value="P:biotin biosynthetic process"/>
    <property type="evidence" value="ECO:0007669"/>
    <property type="project" value="UniProtKB-UniPathway"/>
</dbReference>
<dbReference type="Gene3D" id="3.90.1150.10">
    <property type="entry name" value="Aspartate Aminotransferase, domain 1"/>
    <property type="match status" value="1"/>
</dbReference>
<dbReference type="Gene3D" id="3.40.640.10">
    <property type="entry name" value="Type I PLP-dependent aspartate aminotransferase-like (Major domain)"/>
    <property type="match status" value="1"/>
</dbReference>
<dbReference type="InterPro" id="IPR001917">
    <property type="entry name" value="Aminotrans_II_pyridoxalP_BS"/>
</dbReference>
<dbReference type="InterPro" id="IPR004839">
    <property type="entry name" value="Aminotransferase_I/II_large"/>
</dbReference>
<dbReference type="InterPro" id="IPR050087">
    <property type="entry name" value="AON_synthase_class-II"/>
</dbReference>
<dbReference type="InterPro" id="IPR015424">
    <property type="entry name" value="PyrdxlP-dep_Trfase"/>
</dbReference>
<dbReference type="InterPro" id="IPR015421">
    <property type="entry name" value="PyrdxlP-dep_Trfase_major"/>
</dbReference>
<dbReference type="InterPro" id="IPR015422">
    <property type="entry name" value="PyrdxlP-dep_Trfase_small"/>
</dbReference>
<dbReference type="PANTHER" id="PTHR13693:SF100">
    <property type="entry name" value="8-AMINO-7-OXONONANOATE SYNTHASE"/>
    <property type="match status" value="1"/>
</dbReference>
<dbReference type="PANTHER" id="PTHR13693">
    <property type="entry name" value="CLASS II AMINOTRANSFERASE/8-AMINO-7-OXONONANOATE SYNTHASE"/>
    <property type="match status" value="1"/>
</dbReference>
<dbReference type="Pfam" id="PF00155">
    <property type="entry name" value="Aminotran_1_2"/>
    <property type="match status" value="1"/>
</dbReference>
<dbReference type="SUPFAM" id="SSF53383">
    <property type="entry name" value="PLP-dependent transferases"/>
    <property type="match status" value="1"/>
</dbReference>
<dbReference type="PROSITE" id="PS00599">
    <property type="entry name" value="AA_TRANSFER_CLASS_2"/>
    <property type="match status" value="1"/>
</dbReference>
<proteinExistence type="inferred from homology"/>
<accession>B2IH50</accession>
<comment type="function">
    <text evidence="1">Catalyzes the decarboxylative condensation of pimeloyl-[acyl-carrier protein] and L-alanine to produce 8-amino-7-oxononanoate (AON), [acyl-carrier protein], and carbon dioxide.</text>
</comment>
<comment type="catalytic activity">
    <reaction>
        <text>6-carboxyhexanoyl-[ACP] + L-alanine + H(+) = (8S)-8-amino-7-oxononanoate + holo-[ACP] + CO2</text>
        <dbReference type="Rhea" id="RHEA:42288"/>
        <dbReference type="Rhea" id="RHEA-COMP:9685"/>
        <dbReference type="Rhea" id="RHEA-COMP:9955"/>
        <dbReference type="ChEBI" id="CHEBI:15378"/>
        <dbReference type="ChEBI" id="CHEBI:16526"/>
        <dbReference type="ChEBI" id="CHEBI:57972"/>
        <dbReference type="ChEBI" id="CHEBI:64479"/>
        <dbReference type="ChEBI" id="CHEBI:78846"/>
        <dbReference type="ChEBI" id="CHEBI:149468"/>
        <dbReference type="EC" id="2.3.1.47"/>
    </reaction>
</comment>
<comment type="cofactor">
    <cofactor evidence="1">
        <name>pyridoxal 5'-phosphate</name>
        <dbReference type="ChEBI" id="CHEBI:597326"/>
    </cofactor>
</comment>
<comment type="pathway">
    <text>Cofactor biosynthesis; biotin biosynthesis.</text>
</comment>
<comment type="subunit">
    <text evidence="1">Homodimer.</text>
</comment>
<comment type="similarity">
    <text evidence="2">Belongs to the class-II pyridoxal-phosphate-dependent aminotransferase family. BioF subfamily.</text>
</comment>